<proteinExistence type="inferred from homology"/>
<feature type="chain" id="PRO_0000252646" description="Glucose-6-phosphate isomerase">
    <location>
        <begin position="1"/>
        <end position="549"/>
    </location>
</feature>
<feature type="active site" description="Proton donor" evidence="1">
    <location>
        <position position="355"/>
    </location>
</feature>
<feature type="active site" evidence="1">
    <location>
        <position position="386"/>
    </location>
</feature>
<feature type="active site" evidence="1">
    <location>
        <position position="514"/>
    </location>
</feature>
<comment type="function">
    <text evidence="1">Catalyzes the reversible isomerization of glucose-6-phosphate to fructose-6-phosphate.</text>
</comment>
<comment type="catalytic activity">
    <reaction evidence="1">
        <text>alpha-D-glucose 6-phosphate = beta-D-fructose 6-phosphate</text>
        <dbReference type="Rhea" id="RHEA:11816"/>
        <dbReference type="ChEBI" id="CHEBI:57634"/>
        <dbReference type="ChEBI" id="CHEBI:58225"/>
        <dbReference type="EC" id="5.3.1.9"/>
    </reaction>
</comment>
<comment type="pathway">
    <text evidence="1">Carbohydrate biosynthesis; gluconeogenesis.</text>
</comment>
<comment type="pathway">
    <text evidence="1">Carbohydrate degradation; glycolysis; D-glyceraldehyde 3-phosphate and glycerone phosphate from D-glucose: step 2/4.</text>
</comment>
<comment type="subcellular location">
    <subcellularLocation>
        <location evidence="1">Cytoplasm</location>
    </subcellularLocation>
</comment>
<comment type="similarity">
    <text evidence="1">Belongs to the GPI family.</text>
</comment>
<keyword id="KW-0963">Cytoplasm</keyword>
<keyword id="KW-0312">Gluconeogenesis</keyword>
<keyword id="KW-0324">Glycolysis</keyword>
<keyword id="KW-0413">Isomerase</keyword>
<name>G6PI_SODGM</name>
<organism>
    <name type="scientific">Sodalis glossinidius (strain morsitans)</name>
    <dbReference type="NCBI Taxonomy" id="343509"/>
    <lineage>
        <taxon>Bacteria</taxon>
        <taxon>Pseudomonadati</taxon>
        <taxon>Pseudomonadota</taxon>
        <taxon>Gammaproteobacteria</taxon>
        <taxon>Enterobacterales</taxon>
        <taxon>Bruguierivoracaceae</taxon>
        <taxon>Sodalis</taxon>
    </lineage>
</organism>
<gene>
    <name evidence="1" type="primary">pgi</name>
    <name type="ordered locus">SG2146</name>
</gene>
<accession>Q2NR04</accession>
<protein>
    <recommendedName>
        <fullName evidence="1">Glucose-6-phosphate isomerase</fullName>
        <shortName evidence="1">GPI</shortName>
        <ecNumber evidence="1">5.3.1.9</ecNumber>
    </recommendedName>
    <alternativeName>
        <fullName evidence="1">Phosphoglucose isomerase</fullName>
        <shortName evidence="1">PGI</shortName>
    </alternativeName>
    <alternativeName>
        <fullName evidence="1">Phosphohexose isomerase</fullName>
        <shortName evidence="1">PHI</shortName>
    </alternativeName>
</protein>
<reference key="1">
    <citation type="journal article" date="2006" name="Genome Res.">
        <title>Massive genome erosion and functional adaptations provide insights into the symbiotic lifestyle of Sodalis glossinidius in the tsetse host.</title>
        <authorList>
            <person name="Toh H."/>
            <person name="Weiss B.L."/>
            <person name="Perkin S.A.H."/>
            <person name="Yamashita A."/>
            <person name="Oshima K."/>
            <person name="Hattori M."/>
            <person name="Aksoy S."/>
        </authorList>
    </citation>
    <scope>NUCLEOTIDE SEQUENCE [LARGE SCALE GENOMIC DNA]</scope>
    <source>
        <strain>morsitans</strain>
    </source>
</reference>
<evidence type="ECO:0000255" key="1">
    <source>
        <dbReference type="HAMAP-Rule" id="MF_00473"/>
    </source>
</evidence>
<sequence>MKDINPSHTAAWKALQQHFATMKDVQISDLFAQEPERFSSFSATFNDQMLVDYSKNRITAETLTRLLALAEECGVKEAIAAMFSGEKINRTEDRAVLHVALRNRSNTPINVDDKDVMPDVNAVLVKMKQFCDRVIGGEWKGYTGRIITDIVNIGIGGSDLGPYMVTEALRPYKNHLNMHYVSNVDGTHIAETIKDLDPATTLFLVASKTFTTQETMTNAHSARDWFLKTAGDEQHVARHFAALSTNAKAVAEFGIDTENMFEFWDWVGGRYSLWSAIGLSIALSLGFDNFEKLLSGAHAMDHHFVSTPLDKNLPVLLALIGIWYNNFFGMETEAILPYDQYMHRFAAYFQQGNMESNGKYVDREGHPVSYQTGPIIWGEPGTNGQHSFYQLIHQGTKIVPCDFIAPAISHNPLTDHHAKLLSNFFAQTEALAFGKSREAVEQEFSAAGKSPDQVQHVAPFKVFEGNRPTNSILLREITPYSLGALIALYEHKIFTQGAILNIYTFDQWGVELGKQLANRILPELAQDNPIDAHDSSTNGLINRYKSWRH</sequence>
<dbReference type="EC" id="5.3.1.9" evidence="1"/>
<dbReference type="EMBL" id="AP008232">
    <property type="protein sequence ID" value="BAE75421.1"/>
    <property type="molecule type" value="Genomic_DNA"/>
</dbReference>
<dbReference type="RefSeq" id="WP_011411958.1">
    <property type="nucleotide sequence ID" value="NC_007712.1"/>
</dbReference>
<dbReference type="SMR" id="Q2NR04"/>
<dbReference type="STRING" id="343509.SG2146"/>
<dbReference type="KEGG" id="sgl:SG2146"/>
<dbReference type="eggNOG" id="COG0166">
    <property type="taxonomic scope" value="Bacteria"/>
</dbReference>
<dbReference type="HOGENOM" id="CLU_017947_3_1_6"/>
<dbReference type="OrthoDB" id="140919at2"/>
<dbReference type="BioCyc" id="SGLO343509:SGP1_RS19795-MONOMER"/>
<dbReference type="UniPathway" id="UPA00109">
    <property type="reaction ID" value="UER00181"/>
</dbReference>
<dbReference type="UniPathway" id="UPA00138"/>
<dbReference type="Proteomes" id="UP000001932">
    <property type="component" value="Chromosome"/>
</dbReference>
<dbReference type="GO" id="GO:0005829">
    <property type="term" value="C:cytosol"/>
    <property type="evidence" value="ECO:0007669"/>
    <property type="project" value="TreeGrafter"/>
</dbReference>
<dbReference type="GO" id="GO:0097367">
    <property type="term" value="F:carbohydrate derivative binding"/>
    <property type="evidence" value="ECO:0007669"/>
    <property type="project" value="InterPro"/>
</dbReference>
<dbReference type="GO" id="GO:0004347">
    <property type="term" value="F:glucose-6-phosphate isomerase activity"/>
    <property type="evidence" value="ECO:0007669"/>
    <property type="project" value="UniProtKB-UniRule"/>
</dbReference>
<dbReference type="GO" id="GO:0048029">
    <property type="term" value="F:monosaccharide binding"/>
    <property type="evidence" value="ECO:0007669"/>
    <property type="project" value="TreeGrafter"/>
</dbReference>
<dbReference type="GO" id="GO:0006094">
    <property type="term" value="P:gluconeogenesis"/>
    <property type="evidence" value="ECO:0007669"/>
    <property type="project" value="UniProtKB-UniRule"/>
</dbReference>
<dbReference type="GO" id="GO:0051156">
    <property type="term" value="P:glucose 6-phosphate metabolic process"/>
    <property type="evidence" value="ECO:0007669"/>
    <property type="project" value="TreeGrafter"/>
</dbReference>
<dbReference type="GO" id="GO:0006096">
    <property type="term" value="P:glycolytic process"/>
    <property type="evidence" value="ECO:0007669"/>
    <property type="project" value="UniProtKB-UniRule"/>
</dbReference>
<dbReference type="CDD" id="cd05015">
    <property type="entry name" value="SIS_PGI_1"/>
    <property type="match status" value="1"/>
</dbReference>
<dbReference type="CDD" id="cd05016">
    <property type="entry name" value="SIS_PGI_2"/>
    <property type="match status" value="1"/>
</dbReference>
<dbReference type="FunFam" id="1.10.1390.10:FF:000001">
    <property type="entry name" value="Glucose-6-phosphate isomerase"/>
    <property type="match status" value="1"/>
</dbReference>
<dbReference type="FunFam" id="3.40.50.10490:FF:000004">
    <property type="entry name" value="Glucose-6-phosphate isomerase"/>
    <property type="match status" value="1"/>
</dbReference>
<dbReference type="Gene3D" id="1.10.1390.10">
    <property type="match status" value="1"/>
</dbReference>
<dbReference type="Gene3D" id="3.40.50.10490">
    <property type="entry name" value="Glucose-6-phosphate isomerase like protein, domain 1"/>
    <property type="match status" value="2"/>
</dbReference>
<dbReference type="HAMAP" id="MF_00473">
    <property type="entry name" value="G6P_isomerase"/>
    <property type="match status" value="1"/>
</dbReference>
<dbReference type="InterPro" id="IPR001672">
    <property type="entry name" value="G6P_Isomerase"/>
</dbReference>
<dbReference type="InterPro" id="IPR023096">
    <property type="entry name" value="G6P_Isomerase_C"/>
</dbReference>
<dbReference type="InterPro" id="IPR018189">
    <property type="entry name" value="Phosphoglucose_isomerase_CS"/>
</dbReference>
<dbReference type="InterPro" id="IPR046348">
    <property type="entry name" value="SIS_dom_sf"/>
</dbReference>
<dbReference type="InterPro" id="IPR035476">
    <property type="entry name" value="SIS_PGI_1"/>
</dbReference>
<dbReference type="InterPro" id="IPR035482">
    <property type="entry name" value="SIS_PGI_2"/>
</dbReference>
<dbReference type="NCBIfam" id="NF001211">
    <property type="entry name" value="PRK00179.1"/>
    <property type="match status" value="1"/>
</dbReference>
<dbReference type="PANTHER" id="PTHR11469">
    <property type="entry name" value="GLUCOSE-6-PHOSPHATE ISOMERASE"/>
    <property type="match status" value="1"/>
</dbReference>
<dbReference type="PANTHER" id="PTHR11469:SF1">
    <property type="entry name" value="GLUCOSE-6-PHOSPHATE ISOMERASE"/>
    <property type="match status" value="1"/>
</dbReference>
<dbReference type="Pfam" id="PF00342">
    <property type="entry name" value="PGI"/>
    <property type="match status" value="1"/>
</dbReference>
<dbReference type="PRINTS" id="PR00662">
    <property type="entry name" value="G6PISOMERASE"/>
</dbReference>
<dbReference type="SUPFAM" id="SSF53697">
    <property type="entry name" value="SIS domain"/>
    <property type="match status" value="1"/>
</dbReference>
<dbReference type="PROSITE" id="PS00765">
    <property type="entry name" value="P_GLUCOSE_ISOMERASE_1"/>
    <property type="match status" value="1"/>
</dbReference>
<dbReference type="PROSITE" id="PS00174">
    <property type="entry name" value="P_GLUCOSE_ISOMERASE_2"/>
    <property type="match status" value="1"/>
</dbReference>
<dbReference type="PROSITE" id="PS51463">
    <property type="entry name" value="P_GLUCOSE_ISOMERASE_3"/>
    <property type="match status" value="1"/>
</dbReference>